<keyword id="KW-0414">Isoprene biosynthesis</keyword>
<keyword id="KW-0456">Lyase</keyword>
<keyword id="KW-0479">Metal-binding</keyword>
<keyword id="KW-0511">Multifunctional enzyme</keyword>
<keyword id="KW-0548">Nucleotidyltransferase</keyword>
<keyword id="KW-0808">Transferase</keyword>
<gene>
    <name evidence="1" type="primary">ispDF</name>
    <name type="ordered locus">BruAb1_1126</name>
</gene>
<comment type="function">
    <text evidence="1">Bifunctional enzyme that catalyzes the formation of 4-diphosphocytidyl-2-C-methyl-D-erythritol from CTP and 2-C-methyl-D-erythritol 4-phosphate (MEP) (IspD), and catalyzes the conversion of 4-diphosphocytidyl-2-C-methyl-D-erythritol 2-phosphate (CDP-ME2P) to 2-C-methyl-D-erythritol 2,4-cyclodiphosphate (ME-CPP) with a corresponding release of cytidine 5-monophosphate (CMP) (IspF).</text>
</comment>
<comment type="catalytic activity">
    <reaction evidence="1">
        <text>2-C-methyl-D-erythritol 4-phosphate + CTP + H(+) = 4-CDP-2-C-methyl-D-erythritol + diphosphate</text>
        <dbReference type="Rhea" id="RHEA:13429"/>
        <dbReference type="ChEBI" id="CHEBI:15378"/>
        <dbReference type="ChEBI" id="CHEBI:33019"/>
        <dbReference type="ChEBI" id="CHEBI:37563"/>
        <dbReference type="ChEBI" id="CHEBI:57823"/>
        <dbReference type="ChEBI" id="CHEBI:58262"/>
        <dbReference type="EC" id="2.7.7.60"/>
    </reaction>
</comment>
<comment type="catalytic activity">
    <reaction evidence="1">
        <text>4-CDP-2-C-methyl-D-erythritol 2-phosphate = 2-C-methyl-D-erythritol 2,4-cyclic diphosphate + CMP</text>
        <dbReference type="Rhea" id="RHEA:23864"/>
        <dbReference type="ChEBI" id="CHEBI:57919"/>
        <dbReference type="ChEBI" id="CHEBI:58483"/>
        <dbReference type="ChEBI" id="CHEBI:60377"/>
        <dbReference type="EC" id="4.6.1.12"/>
    </reaction>
</comment>
<comment type="cofactor">
    <cofactor evidence="1">
        <name>a divalent metal cation</name>
        <dbReference type="ChEBI" id="CHEBI:60240"/>
    </cofactor>
</comment>
<comment type="pathway">
    <text evidence="1">Isoprenoid biosynthesis; isopentenyl diphosphate biosynthesis via DXP pathway; isopentenyl diphosphate from 1-deoxy-D-xylulose 5-phosphate: step 2/6.</text>
</comment>
<comment type="pathway">
    <text evidence="1">Isoprenoid biosynthesis; isopentenyl diphosphate biosynthesis via DXP pathway; isopentenyl diphosphate from 1-deoxy-D-xylulose 5-phosphate: step 4/6.</text>
</comment>
<comment type="similarity">
    <text evidence="1">In the N-terminal section; belongs to the IspD/TarI cytidylyltransferase family. IspD subfamily.</text>
</comment>
<comment type="similarity">
    <text evidence="1">In the C-terminal section; belongs to the IspF family.</text>
</comment>
<dbReference type="EC" id="2.7.7.60" evidence="1"/>
<dbReference type="EC" id="4.6.1.12" evidence="1"/>
<dbReference type="EMBL" id="AE017223">
    <property type="protein sequence ID" value="AAX74466.1"/>
    <property type="molecule type" value="Genomic_DNA"/>
</dbReference>
<dbReference type="SMR" id="Q57D18"/>
<dbReference type="EnsemblBacteria" id="AAX74466">
    <property type="protein sequence ID" value="AAX74466"/>
    <property type="gene ID" value="BruAb1_1126"/>
</dbReference>
<dbReference type="KEGG" id="bmb:BruAb1_1126"/>
<dbReference type="HOGENOM" id="CLU_042800_1_1_5"/>
<dbReference type="UniPathway" id="UPA00056">
    <property type="reaction ID" value="UER00093"/>
</dbReference>
<dbReference type="UniPathway" id="UPA00056">
    <property type="reaction ID" value="UER00095"/>
</dbReference>
<dbReference type="Proteomes" id="UP000000540">
    <property type="component" value="Chromosome I"/>
</dbReference>
<dbReference type="GO" id="GO:0008685">
    <property type="term" value="F:2-C-methyl-D-erythritol 2,4-cyclodiphosphate synthase activity"/>
    <property type="evidence" value="ECO:0007669"/>
    <property type="project" value="UniProtKB-UniRule"/>
</dbReference>
<dbReference type="GO" id="GO:0050518">
    <property type="term" value="F:2-C-methyl-D-erythritol 4-phosphate cytidylyltransferase activity"/>
    <property type="evidence" value="ECO:0007669"/>
    <property type="project" value="UniProtKB-UniRule"/>
</dbReference>
<dbReference type="GO" id="GO:0046872">
    <property type="term" value="F:metal ion binding"/>
    <property type="evidence" value="ECO:0007669"/>
    <property type="project" value="UniProtKB-KW"/>
</dbReference>
<dbReference type="GO" id="GO:0019288">
    <property type="term" value="P:isopentenyl diphosphate biosynthetic process, methylerythritol 4-phosphate pathway"/>
    <property type="evidence" value="ECO:0007669"/>
    <property type="project" value="UniProtKB-UniRule"/>
</dbReference>
<dbReference type="GO" id="GO:0016114">
    <property type="term" value="P:terpenoid biosynthetic process"/>
    <property type="evidence" value="ECO:0007669"/>
    <property type="project" value="InterPro"/>
</dbReference>
<dbReference type="CDD" id="cd02516">
    <property type="entry name" value="CDP-ME_synthetase"/>
    <property type="match status" value="1"/>
</dbReference>
<dbReference type="CDD" id="cd00554">
    <property type="entry name" value="MECDP_synthase"/>
    <property type="match status" value="1"/>
</dbReference>
<dbReference type="FunFam" id="3.30.1330.50:FF:000003">
    <property type="entry name" value="2-C-methyl-D-erythritol 2,4-cyclodiphosphate synthase"/>
    <property type="match status" value="1"/>
</dbReference>
<dbReference type="FunFam" id="3.90.550.10:FF:000003">
    <property type="entry name" value="2-C-methyl-D-erythritol 4-phosphate cytidylyltransferase"/>
    <property type="match status" value="1"/>
</dbReference>
<dbReference type="Gene3D" id="3.30.1330.50">
    <property type="entry name" value="2-C-methyl-D-erythritol 2,4-cyclodiphosphate synthase"/>
    <property type="match status" value="1"/>
</dbReference>
<dbReference type="Gene3D" id="3.90.550.10">
    <property type="entry name" value="Spore Coat Polysaccharide Biosynthesis Protein SpsA, Chain A"/>
    <property type="match status" value="1"/>
</dbReference>
<dbReference type="HAMAP" id="MF_01520">
    <property type="entry name" value="IspDF"/>
    <property type="match status" value="1"/>
</dbReference>
<dbReference type="HAMAP" id="MF_00107">
    <property type="entry name" value="IspF"/>
    <property type="match status" value="1"/>
</dbReference>
<dbReference type="InterPro" id="IPR001228">
    <property type="entry name" value="IspD"/>
</dbReference>
<dbReference type="InterPro" id="IPR026596">
    <property type="entry name" value="IspD/F"/>
</dbReference>
<dbReference type="InterPro" id="IPR034683">
    <property type="entry name" value="IspD/TarI"/>
</dbReference>
<dbReference type="InterPro" id="IPR018294">
    <property type="entry name" value="ISPD_synthase_CS"/>
</dbReference>
<dbReference type="InterPro" id="IPR003526">
    <property type="entry name" value="MECDP_synthase"/>
</dbReference>
<dbReference type="InterPro" id="IPR020555">
    <property type="entry name" value="MECDP_synthase_CS"/>
</dbReference>
<dbReference type="InterPro" id="IPR036571">
    <property type="entry name" value="MECDP_synthase_sf"/>
</dbReference>
<dbReference type="InterPro" id="IPR029044">
    <property type="entry name" value="Nucleotide-diphossugar_trans"/>
</dbReference>
<dbReference type="NCBIfam" id="TIGR00453">
    <property type="entry name" value="ispD"/>
    <property type="match status" value="1"/>
</dbReference>
<dbReference type="NCBIfam" id="TIGR00151">
    <property type="entry name" value="ispF"/>
    <property type="match status" value="1"/>
</dbReference>
<dbReference type="NCBIfam" id="NF006899">
    <property type="entry name" value="PRK09382.1"/>
    <property type="match status" value="1"/>
</dbReference>
<dbReference type="PANTHER" id="PTHR43181">
    <property type="entry name" value="2-C-METHYL-D-ERYTHRITOL 2,4-CYCLODIPHOSPHATE SYNTHASE, CHLOROPLASTIC"/>
    <property type="match status" value="1"/>
</dbReference>
<dbReference type="PANTHER" id="PTHR43181:SF1">
    <property type="entry name" value="2-C-METHYL-D-ERYTHRITOL 2,4-CYCLODIPHOSPHATE SYNTHASE, CHLOROPLASTIC"/>
    <property type="match status" value="1"/>
</dbReference>
<dbReference type="Pfam" id="PF01128">
    <property type="entry name" value="IspD"/>
    <property type="match status" value="1"/>
</dbReference>
<dbReference type="Pfam" id="PF02542">
    <property type="entry name" value="YgbB"/>
    <property type="match status" value="1"/>
</dbReference>
<dbReference type="SUPFAM" id="SSF69765">
    <property type="entry name" value="IpsF-like"/>
    <property type="match status" value="1"/>
</dbReference>
<dbReference type="SUPFAM" id="SSF53448">
    <property type="entry name" value="Nucleotide-diphospho-sugar transferases"/>
    <property type="match status" value="1"/>
</dbReference>
<dbReference type="PROSITE" id="PS01295">
    <property type="entry name" value="ISPD"/>
    <property type="match status" value="1"/>
</dbReference>
<dbReference type="PROSITE" id="PS01350">
    <property type="entry name" value="ISPF"/>
    <property type="match status" value="1"/>
</dbReference>
<reference key="1">
    <citation type="journal article" date="2005" name="J. Bacteriol.">
        <title>Completion of the genome sequence of Brucella abortus and comparison to the highly similar genomes of Brucella melitensis and Brucella suis.</title>
        <authorList>
            <person name="Halling S.M."/>
            <person name="Peterson-Burch B.D."/>
            <person name="Bricker B.J."/>
            <person name="Zuerner R.L."/>
            <person name="Qing Z."/>
            <person name="Li L.-L."/>
            <person name="Kapur V."/>
            <person name="Alt D.P."/>
            <person name="Olsen S.C."/>
        </authorList>
    </citation>
    <scope>NUCLEOTIDE SEQUENCE [LARGE SCALE GENOMIC DNA]</scope>
    <source>
        <strain>9-941</strain>
    </source>
</reference>
<name>ISPDF_BRUAB</name>
<accession>Q57D18</accession>
<feature type="chain" id="PRO_0000075659" description="Bifunctional enzyme IspD/IspF">
    <location>
        <begin position="1"/>
        <end position="390"/>
    </location>
</feature>
<feature type="region of interest" description="2-C-methyl-D-erythritol 4-phosphate cytidylyltransferase" evidence="1">
    <location>
        <begin position="1"/>
        <end position="229"/>
    </location>
</feature>
<feature type="region of interest" description="2-C-methyl-D-erythritol 2,4-cyclodiphosphate synthase" evidence="1">
    <location>
        <begin position="230"/>
        <end position="390"/>
    </location>
</feature>
<feature type="binding site" evidence="1">
    <location>
        <begin position="236"/>
        <end position="238"/>
    </location>
    <ligand>
        <name>4-CDP-2-C-methyl-D-erythritol 2-phosphate</name>
        <dbReference type="ChEBI" id="CHEBI:57919"/>
    </ligand>
</feature>
<feature type="binding site" evidence="1">
    <location>
        <position position="236"/>
    </location>
    <ligand>
        <name>a divalent metal cation</name>
        <dbReference type="ChEBI" id="CHEBI:60240"/>
    </ligand>
</feature>
<feature type="binding site" evidence="1">
    <location>
        <position position="238"/>
    </location>
    <ligand>
        <name>a divalent metal cation</name>
        <dbReference type="ChEBI" id="CHEBI:60240"/>
    </ligand>
</feature>
<feature type="binding site" evidence="1">
    <location>
        <begin position="262"/>
        <end position="263"/>
    </location>
    <ligand>
        <name>4-CDP-2-C-methyl-D-erythritol 2-phosphate</name>
        <dbReference type="ChEBI" id="CHEBI:57919"/>
    </ligand>
</feature>
<feature type="binding site" evidence="1">
    <location>
        <position position="270"/>
    </location>
    <ligand>
        <name>a divalent metal cation</name>
        <dbReference type="ChEBI" id="CHEBI:60240"/>
    </ligand>
</feature>
<feature type="binding site" evidence="1">
    <location>
        <begin position="284"/>
        <end position="286"/>
    </location>
    <ligand>
        <name>4-CDP-2-C-methyl-D-erythritol 2-phosphate</name>
        <dbReference type="ChEBI" id="CHEBI:57919"/>
    </ligand>
</feature>
<feature type="binding site" evidence="1">
    <location>
        <begin position="360"/>
        <end position="363"/>
    </location>
    <ligand>
        <name>4-CDP-2-C-methyl-D-erythritol 2-phosphate</name>
        <dbReference type="ChEBI" id="CHEBI:57919"/>
    </ligand>
</feature>
<feature type="binding site" evidence="1">
    <location>
        <position position="367"/>
    </location>
    <ligand>
        <name>4-CDP-2-C-methyl-D-erythritol 2-phosphate</name>
        <dbReference type="ChEBI" id="CHEBI:57919"/>
    </ligand>
</feature>
<feature type="binding site" evidence="1">
    <location>
        <position position="370"/>
    </location>
    <ligand>
        <name>4-CDP-2-C-methyl-D-erythritol 2-phosphate</name>
        <dbReference type="ChEBI" id="CHEBI:57919"/>
    </ligand>
</feature>
<feature type="site" description="Transition state stabilizer" evidence="1">
    <location>
        <position position="8"/>
    </location>
</feature>
<feature type="site" description="Transition state stabilizer" evidence="1">
    <location>
        <position position="17"/>
    </location>
</feature>
<feature type="site" description="Positions MEP for the nucleophilic attack" evidence="1">
    <location>
        <position position="148"/>
    </location>
</feature>
<feature type="site" description="Positions MEP for the nucleophilic attack" evidence="1">
    <location>
        <position position="205"/>
    </location>
</feature>
<feature type="site" description="Transition state stabilizer" evidence="1">
    <location>
        <position position="262"/>
    </location>
</feature>
<feature type="site" description="Transition state stabilizer" evidence="1">
    <location>
        <position position="361"/>
    </location>
</feature>
<organism>
    <name type="scientific">Brucella abortus biovar 1 (strain 9-941)</name>
    <dbReference type="NCBI Taxonomy" id="262698"/>
    <lineage>
        <taxon>Bacteria</taxon>
        <taxon>Pseudomonadati</taxon>
        <taxon>Pseudomonadota</taxon>
        <taxon>Alphaproteobacteria</taxon>
        <taxon>Hyphomicrobiales</taxon>
        <taxon>Brucellaceae</taxon>
        <taxon>Brucella/Ochrobactrum group</taxon>
        <taxon>Brucella</taxon>
    </lineage>
</organism>
<proteinExistence type="inferred from homology"/>
<evidence type="ECO:0000255" key="1">
    <source>
        <dbReference type="HAMAP-Rule" id="MF_01520"/>
    </source>
</evidence>
<sequence length="390" mass="41840">MAAGRGERAGQSAEGPKQYRLIGAEAVLARTLRAFTDCPLIGTIAVVIHPDDHALYRRAVPEKHENVILVTGGPTRQESTRLGLLALKDEAPQYVLIHDGVRPFIGQDLLERIIANLTPDNGVLPALAVSDTLKRAAADGMVETTISRTGLFAAQTPQAFPYAPILDAHEKAFAINRTDFTDDAAIAEWQEIAVRIIEGSADNTKLTWAKDIEMADKRLRQDHAVFPDIRTGNGYDVHSFEPGDHVTLCGVKIPHEAKLNGHSDADVALHALTDALLATRGAGDIGTHFPPSDPQWKGAASRIFIEHAAKIVREAGGRIANVDVTLISEAPKIGPHRAAMTQALCDMLGIAADRVSIKATTNEKLGFVGRREGIAAIATATVIYPGEVPE</sequence>
<protein>
    <recommendedName>
        <fullName evidence="1">Bifunctional enzyme IspD/IspF</fullName>
    </recommendedName>
    <domain>
        <recommendedName>
            <fullName evidence="1">2-C-methyl-D-erythritol 4-phosphate cytidylyltransferase</fullName>
            <ecNumber evidence="1">2.7.7.60</ecNumber>
        </recommendedName>
        <alternativeName>
            <fullName evidence="1">4-diphosphocytidyl-2C-methyl-D-erythritol synthase</fullName>
        </alternativeName>
        <alternativeName>
            <fullName evidence="1">MEP cytidylyltransferase</fullName>
            <shortName evidence="1">MCT</shortName>
        </alternativeName>
    </domain>
    <domain>
        <recommendedName>
            <fullName evidence="1">2-C-methyl-D-erythritol 2,4-cyclodiphosphate synthase</fullName>
            <shortName evidence="1">MECDP-synthase</shortName>
            <shortName evidence="1">MECPP-synthase</shortName>
            <shortName evidence="1">MECPS</shortName>
            <ecNumber evidence="1">4.6.1.12</ecNumber>
        </recommendedName>
    </domain>
</protein>